<sequence length="442" mass="49971">MPLPIFPSRLQCSSSSSSSSSRSSFFRPKLRIDPSLTLIPGLSNDVGRLILSFVPYPHISRIKSTCKSWYAFLSSKTLISLRHSRDNSNTNNLSHLLCIFPQDPSISPPFLFDPVTLSWRSLPLMPCNPHVYGLCNFVAVALGPYVYVLGGSAFDTRSYPLDVPLPTSSVFRYSFVKSVWERLSPMMSPRGSFACAAMPGSCGRIIVAGGGSRHTLFGAAGSRMSSVEMYDVEKDEWRVMNELPRFRAGCVGFLVENEKEKEKEEEGREFWVMGGYGGSRTVSGILPVDEYYKDAVVMDLRVDGGEKWRVVGDMWGEEERPKLGKIVAVDCGKPVFFMLDKDWILRYEMGLNRWRKESSVPKKAHYDKPVGFVALNGELHVMILLDGYNLMDTRHTRQQRKAGSLMIHMYDPKKKTWRSVVSKPPFNHQLDFRTTVMCTIRL</sequence>
<feature type="chain" id="PRO_0000285580" description="F-box/kelch-repeat protein OR23">
    <location>
        <begin position="1"/>
        <end position="442"/>
    </location>
</feature>
<feature type="domain" description="F-box">
    <location>
        <begin position="37"/>
        <end position="84"/>
    </location>
</feature>
<feature type="repeat" description="Kelch 1">
    <location>
        <begin position="93"/>
        <end position="139"/>
    </location>
</feature>
<feature type="repeat" description="Kelch 2">
    <location>
        <begin position="145"/>
        <end position="200"/>
    </location>
</feature>
<feature type="repeat" description="Kelch 3">
    <location>
        <begin position="204"/>
        <end position="257"/>
    </location>
</feature>
<feature type="repeat" description="Kelch 4">
    <location>
        <begin position="269"/>
        <end position="328"/>
    </location>
</feature>
<feature type="repeat" description="Kelch 5">
    <location>
        <begin position="330"/>
        <end position="377"/>
    </location>
</feature>
<feature type="repeat" description="Kelch 6">
    <location>
        <begin position="390"/>
        <end position="437"/>
    </location>
</feature>
<comment type="sequence caution" evidence="1">
    <conflict type="erroneous gene model prediction">
        <sequence resource="EMBL-CDS" id="AAC79103"/>
    </conflict>
</comment>
<comment type="sequence caution" evidence="1">
    <conflict type="erroneous gene model prediction">
        <sequence resource="EMBL-CDS" id="CAB77788"/>
    </conflict>
</comment>
<keyword id="KW-0880">Kelch repeat</keyword>
<keyword id="KW-1185">Reference proteome</keyword>
<keyword id="KW-0677">Repeat</keyword>
<organism>
    <name type="scientific">Arabidopsis thaliana</name>
    <name type="common">Mouse-ear cress</name>
    <dbReference type="NCBI Taxonomy" id="3702"/>
    <lineage>
        <taxon>Eukaryota</taxon>
        <taxon>Viridiplantae</taxon>
        <taxon>Streptophyta</taxon>
        <taxon>Embryophyta</taxon>
        <taxon>Tracheophyta</taxon>
        <taxon>Spermatophyta</taxon>
        <taxon>Magnoliopsida</taxon>
        <taxon>eudicotyledons</taxon>
        <taxon>Gunneridae</taxon>
        <taxon>Pentapetalae</taxon>
        <taxon>rosids</taxon>
        <taxon>malvids</taxon>
        <taxon>Brassicales</taxon>
        <taxon>Brassicaceae</taxon>
        <taxon>Camelineae</taxon>
        <taxon>Arabidopsis</taxon>
    </lineage>
</organism>
<gene>
    <name type="primary">OR23</name>
    <name type="ordered locus">At4g03030</name>
    <name type="ORF">T4I9.9</name>
</gene>
<reference key="1">
    <citation type="journal article" date="1999" name="Nature">
        <title>Sequence and analysis of chromosome 4 of the plant Arabidopsis thaliana.</title>
        <authorList>
            <person name="Mayer K.F.X."/>
            <person name="Schueller C."/>
            <person name="Wambutt R."/>
            <person name="Murphy G."/>
            <person name="Volckaert G."/>
            <person name="Pohl T."/>
            <person name="Duesterhoeft A."/>
            <person name="Stiekema W."/>
            <person name="Entian K.-D."/>
            <person name="Terryn N."/>
            <person name="Harris B."/>
            <person name="Ansorge W."/>
            <person name="Brandt P."/>
            <person name="Grivell L.A."/>
            <person name="Rieger M."/>
            <person name="Weichselgartner M."/>
            <person name="de Simone V."/>
            <person name="Obermaier B."/>
            <person name="Mache R."/>
            <person name="Mueller M."/>
            <person name="Kreis M."/>
            <person name="Delseny M."/>
            <person name="Puigdomenech P."/>
            <person name="Watson M."/>
            <person name="Schmidtheini T."/>
            <person name="Reichert B."/>
            <person name="Portetelle D."/>
            <person name="Perez-Alonso M."/>
            <person name="Boutry M."/>
            <person name="Bancroft I."/>
            <person name="Vos P."/>
            <person name="Hoheisel J."/>
            <person name="Zimmermann W."/>
            <person name="Wedler H."/>
            <person name="Ridley P."/>
            <person name="Langham S.-A."/>
            <person name="McCullagh B."/>
            <person name="Bilham L."/>
            <person name="Robben J."/>
            <person name="van der Schueren J."/>
            <person name="Grymonprez B."/>
            <person name="Chuang Y.-J."/>
            <person name="Vandenbussche F."/>
            <person name="Braeken M."/>
            <person name="Weltjens I."/>
            <person name="Voet M."/>
            <person name="Bastiaens I."/>
            <person name="Aert R."/>
            <person name="Defoor E."/>
            <person name="Weitzenegger T."/>
            <person name="Bothe G."/>
            <person name="Ramsperger U."/>
            <person name="Hilbert H."/>
            <person name="Braun M."/>
            <person name="Holzer E."/>
            <person name="Brandt A."/>
            <person name="Peters S."/>
            <person name="van Staveren M."/>
            <person name="Dirkse W."/>
            <person name="Mooijman P."/>
            <person name="Klein Lankhorst R."/>
            <person name="Rose M."/>
            <person name="Hauf J."/>
            <person name="Koetter P."/>
            <person name="Berneiser S."/>
            <person name="Hempel S."/>
            <person name="Feldpausch M."/>
            <person name="Lamberth S."/>
            <person name="Van den Daele H."/>
            <person name="De Keyser A."/>
            <person name="Buysshaert C."/>
            <person name="Gielen J."/>
            <person name="Villarroel R."/>
            <person name="De Clercq R."/>
            <person name="van Montagu M."/>
            <person name="Rogers J."/>
            <person name="Cronin A."/>
            <person name="Quail M.A."/>
            <person name="Bray-Allen S."/>
            <person name="Clark L."/>
            <person name="Doggett J."/>
            <person name="Hall S."/>
            <person name="Kay M."/>
            <person name="Lennard N."/>
            <person name="McLay K."/>
            <person name="Mayes R."/>
            <person name="Pettett A."/>
            <person name="Rajandream M.A."/>
            <person name="Lyne M."/>
            <person name="Benes V."/>
            <person name="Rechmann S."/>
            <person name="Borkova D."/>
            <person name="Bloecker H."/>
            <person name="Scharfe M."/>
            <person name="Grimm M."/>
            <person name="Loehnert T.-H."/>
            <person name="Dose S."/>
            <person name="de Haan M."/>
            <person name="Maarse A.C."/>
            <person name="Schaefer M."/>
            <person name="Mueller-Auer S."/>
            <person name="Gabel C."/>
            <person name="Fuchs M."/>
            <person name="Fartmann B."/>
            <person name="Granderath K."/>
            <person name="Dauner D."/>
            <person name="Herzl A."/>
            <person name="Neumann S."/>
            <person name="Argiriou A."/>
            <person name="Vitale D."/>
            <person name="Liguori R."/>
            <person name="Piravandi E."/>
            <person name="Massenet O."/>
            <person name="Quigley F."/>
            <person name="Clabauld G."/>
            <person name="Muendlein A."/>
            <person name="Felber R."/>
            <person name="Schnabl S."/>
            <person name="Hiller R."/>
            <person name="Schmidt W."/>
            <person name="Lecharny A."/>
            <person name="Aubourg S."/>
            <person name="Chefdor F."/>
            <person name="Cooke R."/>
            <person name="Berger C."/>
            <person name="Monfort A."/>
            <person name="Casacuberta E."/>
            <person name="Gibbons T."/>
            <person name="Weber N."/>
            <person name="Vandenbol M."/>
            <person name="Bargues M."/>
            <person name="Terol J."/>
            <person name="Torres A."/>
            <person name="Perez-Perez A."/>
            <person name="Purnelle B."/>
            <person name="Bent E."/>
            <person name="Johnson S."/>
            <person name="Tacon D."/>
            <person name="Jesse T."/>
            <person name="Heijnen L."/>
            <person name="Schwarz S."/>
            <person name="Scholler P."/>
            <person name="Heber S."/>
            <person name="Francs P."/>
            <person name="Bielke C."/>
            <person name="Frishman D."/>
            <person name="Haase D."/>
            <person name="Lemcke K."/>
            <person name="Mewes H.-W."/>
            <person name="Stocker S."/>
            <person name="Zaccaria P."/>
            <person name="Bevan M."/>
            <person name="Wilson R.K."/>
            <person name="de la Bastide M."/>
            <person name="Habermann K."/>
            <person name="Parnell L."/>
            <person name="Dedhia N."/>
            <person name="Gnoj L."/>
            <person name="Schutz K."/>
            <person name="Huang E."/>
            <person name="Spiegel L."/>
            <person name="Sekhon M."/>
            <person name="Murray J."/>
            <person name="Sheet P."/>
            <person name="Cordes M."/>
            <person name="Abu-Threideh J."/>
            <person name="Stoneking T."/>
            <person name="Kalicki J."/>
            <person name="Graves T."/>
            <person name="Harmon G."/>
            <person name="Edwards J."/>
            <person name="Latreille P."/>
            <person name="Courtney L."/>
            <person name="Cloud J."/>
            <person name="Abbott A."/>
            <person name="Scott K."/>
            <person name="Johnson D."/>
            <person name="Minx P."/>
            <person name="Bentley D."/>
            <person name="Fulton B."/>
            <person name="Miller N."/>
            <person name="Greco T."/>
            <person name="Kemp K."/>
            <person name="Kramer J."/>
            <person name="Fulton L."/>
            <person name="Mardis E."/>
            <person name="Dante M."/>
            <person name="Pepin K."/>
            <person name="Hillier L.W."/>
            <person name="Nelson J."/>
            <person name="Spieth J."/>
            <person name="Ryan E."/>
            <person name="Andrews S."/>
            <person name="Geisel C."/>
            <person name="Layman D."/>
            <person name="Du H."/>
            <person name="Ali J."/>
            <person name="Berghoff A."/>
            <person name="Jones K."/>
            <person name="Drone K."/>
            <person name="Cotton M."/>
            <person name="Joshu C."/>
            <person name="Antonoiu B."/>
            <person name="Zidanic M."/>
            <person name="Strong C."/>
            <person name="Sun H."/>
            <person name="Lamar B."/>
            <person name="Yordan C."/>
            <person name="Ma P."/>
            <person name="Zhong J."/>
            <person name="Preston R."/>
            <person name="Vil D."/>
            <person name="Shekher M."/>
            <person name="Matero A."/>
            <person name="Shah R."/>
            <person name="Swaby I.K."/>
            <person name="O'Shaughnessy A."/>
            <person name="Rodriguez M."/>
            <person name="Hoffman J."/>
            <person name="Till S."/>
            <person name="Granat S."/>
            <person name="Shohdy N."/>
            <person name="Hasegawa A."/>
            <person name="Hameed A."/>
            <person name="Lodhi M."/>
            <person name="Johnson A."/>
            <person name="Chen E."/>
            <person name="Marra M.A."/>
            <person name="Martienssen R."/>
            <person name="McCombie W.R."/>
        </authorList>
    </citation>
    <scope>NUCLEOTIDE SEQUENCE [LARGE SCALE GENOMIC DNA]</scope>
    <source>
        <strain>cv. Columbia</strain>
    </source>
</reference>
<reference key="2">
    <citation type="journal article" date="2017" name="Plant J.">
        <title>Araport11: a complete reannotation of the Arabidopsis thaliana reference genome.</title>
        <authorList>
            <person name="Cheng C.Y."/>
            <person name="Krishnakumar V."/>
            <person name="Chan A.P."/>
            <person name="Thibaud-Nissen F."/>
            <person name="Schobel S."/>
            <person name="Town C.D."/>
        </authorList>
    </citation>
    <scope>GENOME REANNOTATION</scope>
    <source>
        <strain>cv. Columbia</strain>
    </source>
</reference>
<reference key="3">
    <citation type="submission" date="2006-08" db="EMBL/GenBank/DDBJ databases">
        <title>Arabidopsis ORF clones.</title>
        <authorList>
            <person name="Quinitio C."/>
            <person name="Chen H."/>
            <person name="Kim C.J."/>
            <person name="Shinn P."/>
            <person name="Ecker J.R."/>
        </authorList>
    </citation>
    <scope>NUCLEOTIDE SEQUENCE [LARGE SCALE MRNA]</scope>
    <source>
        <strain>cv. Columbia</strain>
    </source>
</reference>
<reference key="4">
    <citation type="submission" date="1995-10" db="EMBL/GenBank/DDBJ databases">
        <title>OR23 is a 5' truncated cDNA sequence from Arabidopsis.</title>
        <authorList>
            <person name="Loebler M."/>
        </authorList>
    </citation>
    <scope>NUCLEOTIDE SEQUENCE [MRNA] OF 251-442</scope>
    <source>
        <strain>cv. Columbia</strain>
        <tissue>Leaf</tissue>
    </source>
</reference>
<accession>Q0V7S6</accession>
<accession>Q38891</accession>
<accession>Q7DML4</accession>
<protein>
    <recommendedName>
        <fullName>F-box/kelch-repeat protein OR23</fullName>
    </recommendedName>
</protein>
<name>FK125_ARATH</name>
<proteinExistence type="evidence at transcript level"/>
<evidence type="ECO:0000305" key="1"/>
<dbReference type="EMBL" id="AF069442">
    <property type="protein sequence ID" value="AAC79103.1"/>
    <property type="status" value="ALT_SEQ"/>
    <property type="molecule type" value="Genomic_DNA"/>
</dbReference>
<dbReference type="EMBL" id="AL161495">
    <property type="protein sequence ID" value="CAB77788.1"/>
    <property type="status" value="ALT_SEQ"/>
    <property type="molecule type" value="Genomic_DNA"/>
</dbReference>
<dbReference type="EMBL" id="CP002687">
    <property type="protein sequence ID" value="AEE82263.1"/>
    <property type="molecule type" value="Genomic_DNA"/>
</dbReference>
<dbReference type="EMBL" id="BT026494">
    <property type="protein sequence ID" value="ABH04601.1"/>
    <property type="molecule type" value="mRNA"/>
</dbReference>
<dbReference type="EMBL" id="U37704">
    <property type="protein sequence ID" value="AAA79706.1"/>
    <property type="molecule type" value="mRNA"/>
</dbReference>
<dbReference type="PIR" id="T01390">
    <property type="entry name" value="T01390"/>
</dbReference>
<dbReference type="RefSeq" id="NP_192212.2">
    <property type="nucleotide sequence ID" value="NM_116537.4"/>
</dbReference>
<dbReference type="SMR" id="Q0V7S6"/>
<dbReference type="FunCoup" id="Q0V7S6">
    <property type="interactions" value="296"/>
</dbReference>
<dbReference type="STRING" id="3702.Q0V7S6"/>
<dbReference type="PaxDb" id="3702-AT4G03030.1"/>
<dbReference type="ProteomicsDB" id="230517"/>
<dbReference type="EnsemblPlants" id="AT4G03030.1">
    <property type="protein sequence ID" value="AT4G03030.1"/>
    <property type="gene ID" value="AT4G03030"/>
</dbReference>
<dbReference type="GeneID" id="828110"/>
<dbReference type="Gramene" id="AT4G03030.1">
    <property type="protein sequence ID" value="AT4G03030.1"/>
    <property type="gene ID" value="AT4G03030"/>
</dbReference>
<dbReference type="KEGG" id="ath:AT4G03030"/>
<dbReference type="Araport" id="AT4G03030"/>
<dbReference type="TAIR" id="AT4G03030"/>
<dbReference type="eggNOG" id="KOG1072">
    <property type="taxonomic scope" value="Eukaryota"/>
</dbReference>
<dbReference type="HOGENOM" id="CLU_039887_0_0_1"/>
<dbReference type="InParanoid" id="Q0V7S6"/>
<dbReference type="OMA" id="TVMCTIR"/>
<dbReference type="OrthoDB" id="45365at2759"/>
<dbReference type="PhylomeDB" id="Q0V7S6"/>
<dbReference type="PRO" id="PR:Q0V7S6"/>
<dbReference type="Proteomes" id="UP000006548">
    <property type="component" value="Chromosome 4"/>
</dbReference>
<dbReference type="ExpressionAtlas" id="Q0V7S6">
    <property type="expression patterns" value="baseline and differential"/>
</dbReference>
<dbReference type="Gene3D" id="2.120.10.80">
    <property type="entry name" value="Kelch-type beta propeller"/>
    <property type="match status" value="1"/>
</dbReference>
<dbReference type="InterPro" id="IPR036047">
    <property type="entry name" value="F-box-like_dom_sf"/>
</dbReference>
<dbReference type="InterPro" id="IPR001810">
    <property type="entry name" value="F-box_dom"/>
</dbReference>
<dbReference type="InterPro" id="IPR015915">
    <property type="entry name" value="Kelch-typ_b-propeller"/>
</dbReference>
<dbReference type="InterPro" id="IPR006652">
    <property type="entry name" value="Kelch_1"/>
</dbReference>
<dbReference type="PANTHER" id="PTHR47850">
    <property type="entry name" value="F-BOX/KELCH-REPEAT PROTEIN OR23"/>
    <property type="match status" value="1"/>
</dbReference>
<dbReference type="PANTHER" id="PTHR47850:SF1">
    <property type="entry name" value="F-BOX_KELCH-REPEAT PROTEIN OR23"/>
    <property type="match status" value="1"/>
</dbReference>
<dbReference type="Pfam" id="PF00646">
    <property type="entry name" value="F-box"/>
    <property type="match status" value="1"/>
</dbReference>
<dbReference type="Pfam" id="PF01344">
    <property type="entry name" value="Kelch_1"/>
    <property type="match status" value="2"/>
</dbReference>
<dbReference type="SMART" id="SM00612">
    <property type="entry name" value="Kelch"/>
    <property type="match status" value="2"/>
</dbReference>
<dbReference type="SUPFAM" id="SSF81383">
    <property type="entry name" value="F-box domain"/>
    <property type="match status" value="1"/>
</dbReference>
<dbReference type="SUPFAM" id="SSF117281">
    <property type="entry name" value="Kelch motif"/>
    <property type="match status" value="1"/>
</dbReference>